<feature type="chain" id="PRO_0000299244" description="Matrix protein">
    <location>
        <begin position="1"/>
        <end position="174"/>
    </location>
</feature>
<accession>Q9JGT5</accession>
<reference key="1">
    <citation type="journal article" date="2000" name="Arch. Virol.">
        <title>Complete nucleotide sequence of Northern cereal mosaic virus and its genome organization.</title>
        <authorList>
            <person name="Tanno F."/>
            <person name="Nakatsu A."/>
            <person name="Toriyama S."/>
            <person name="Kojima M."/>
        </authorList>
    </citation>
    <scope>NUCLEOTIDE SEQUENCE [GENOMIC RNA]</scope>
</reference>
<sequence>MATEVSTRFIFIKIDALSTLHFIDEGGALSMNGDSIEFLIGKSSLDKGLLKRATKLFTWLFSPEIAKQHLSITRSTESNVYMTDATRYKYIFPEYLLVRYVGTKFPDMKIVADATFKRRNPKGDVIGMLDLSFKEVRVKEVSETKAIELRDSNPGYLLSTTYRESESLPVVSKP</sequence>
<proteinExistence type="inferred from homology"/>
<protein>
    <recommendedName>
        <fullName>Matrix protein</fullName>
    </recommendedName>
</protein>
<gene>
    <name type="primary">M</name>
</gene>
<keyword id="KW-0053">Apoptosis</keyword>
<keyword id="KW-1043">Host membrane</keyword>
<keyword id="KW-0472">Membrane</keyword>
<keyword id="KW-1185">Reference proteome</keyword>
<keyword id="KW-0261">Viral envelope protein</keyword>
<keyword id="KW-0468">Viral matrix protein</keyword>
<keyword id="KW-0946">Virion</keyword>
<name>MATRX_NCMV</name>
<organismHost>
    <name type="scientific">Hordeum vulgare</name>
    <name type="common">Barley</name>
    <dbReference type="NCBI Taxonomy" id="4513"/>
</organismHost>
<comment type="function">
    <text evidence="1">Plays a major role in assembly and budding of virion. Completely covers the ribonucleoprotein coil and keep it in condensed bullet-shaped form. Inhibits viral transcription and stimulates replication (By similarity).</text>
</comment>
<comment type="subunit">
    <text evidence="1">Homomultimer. Interacts with nucleoprotein and with the cytoplasmic domain of glycoprotein (By similarity).</text>
</comment>
<comment type="subcellular location">
    <subcellularLocation>
        <location>Virion membrane</location>
        <topology>Peripheral membrane protein</topology>
    </subcellularLocation>
    <subcellularLocation>
        <location evidence="1">Host endomembrane system</location>
        <topology evidence="1">Peripheral membrane protein</topology>
    </subcellularLocation>
</comment>
<comment type="miscellaneous">
    <text evidence="1">Most abundant protein in the virion.</text>
</comment>
<organism>
    <name type="scientific">Northern cereal mosaic virus</name>
    <name type="common">NCMV</name>
    <dbReference type="NCBI Taxonomy" id="1985704"/>
    <lineage>
        <taxon>Viruses</taxon>
        <taxon>Riboviria</taxon>
        <taxon>Orthornavirae</taxon>
        <taxon>Negarnaviricota</taxon>
        <taxon>Haploviricotina</taxon>
        <taxon>Monjiviricetes</taxon>
        <taxon>Mononegavirales</taxon>
        <taxon>Rhabdoviridae</taxon>
        <taxon>Betarhabdovirinae</taxon>
        <taxon>Cytorhabdovirus</taxon>
    </lineage>
</organism>
<dbReference type="EMBL" id="AB030277">
    <property type="protein sequence ID" value="BAA95350.1"/>
    <property type="molecule type" value="Genomic_RNA"/>
</dbReference>
<dbReference type="RefSeq" id="NP_057960.1">
    <property type="nucleotide sequence ID" value="NC_002251.1"/>
</dbReference>
<dbReference type="GeneID" id="1457723"/>
<dbReference type="KEGG" id="vg:1457723"/>
<dbReference type="OrthoDB" id="37277at10239"/>
<dbReference type="Proteomes" id="UP000007785">
    <property type="component" value="Genome"/>
</dbReference>
<dbReference type="GO" id="GO:0033645">
    <property type="term" value="C:host cell endomembrane system"/>
    <property type="evidence" value="ECO:0007669"/>
    <property type="project" value="UniProtKB-SubCell"/>
</dbReference>
<dbReference type="GO" id="GO:0016020">
    <property type="term" value="C:membrane"/>
    <property type="evidence" value="ECO:0007669"/>
    <property type="project" value="UniProtKB-KW"/>
</dbReference>
<dbReference type="GO" id="GO:0019031">
    <property type="term" value="C:viral envelope"/>
    <property type="evidence" value="ECO:0007669"/>
    <property type="project" value="UniProtKB-KW"/>
</dbReference>
<dbReference type="GO" id="GO:0055036">
    <property type="term" value="C:virion membrane"/>
    <property type="evidence" value="ECO:0007669"/>
    <property type="project" value="UniProtKB-SubCell"/>
</dbReference>
<dbReference type="GO" id="GO:0039660">
    <property type="term" value="F:structural constituent of virion"/>
    <property type="evidence" value="ECO:0007669"/>
    <property type="project" value="UniProtKB-KW"/>
</dbReference>
<evidence type="ECO:0000250" key="1"/>